<keyword id="KW-0002">3D-structure</keyword>
<keyword id="KW-0025">Alternative splicing</keyword>
<keyword id="KW-1003">Cell membrane</keyword>
<keyword id="KW-1015">Disulfide bond</keyword>
<keyword id="KW-0325">Glycoprotein</keyword>
<keyword id="KW-0407">Ion channel</keyword>
<keyword id="KW-0406">Ion transport</keyword>
<keyword id="KW-1071">Ligand-gated ion channel</keyword>
<keyword id="KW-0449">Lipoprotein</keyword>
<keyword id="KW-0472">Membrane</keyword>
<keyword id="KW-0564">Palmitate</keyword>
<keyword id="KW-0597">Phosphoprotein</keyword>
<keyword id="KW-0628">Postsynaptic cell membrane</keyword>
<keyword id="KW-0675">Receptor</keyword>
<keyword id="KW-1185">Reference proteome</keyword>
<keyword id="KW-0732">Signal</keyword>
<keyword id="KW-0770">Synapse</keyword>
<keyword id="KW-0812">Transmembrane</keyword>
<keyword id="KW-1133">Transmembrane helix</keyword>
<keyword id="KW-0813">Transport</keyword>
<proteinExistence type="evidence at protein level"/>
<dbReference type="EMBL" id="M36420">
    <property type="protein sequence ID" value="AAA41245.1"/>
    <property type="molecule type" value="mRNA"/>
</dbReference>
<dbReference type="EMBL" id="X54656">
    <property type="protein sequence ID" value="CAA38466.1"/>
    <property type="molecule type" value="mRNA"/>
</dbReference>
<dbReference type="EMBL" id="M38062">
    <property type="protein sequence ID" value="AAA63480.1"/>
    <property type="molecule type" value="mRNA"/>
</dbReference>
<dbReference type="EMBL" id="M85036">
    <property type="protein sequence ID" value="AAA41241.2"/>
    <property type="molecule type" value="mRNA"/>
</dbReference>
<dbReference type="PIR" id="C40170">
    <property type="entry name" value="C40170"/>
</dbReference>
<dbReference type="RefSeq" id="NP_001106213.1">
    <property type="nucleotide sequence ID" value="NM_001112742.1"/>
</dbReference>
<dbReference type="RefSeq" id="NP_116785.2">
    <property type="nucleotide sequence ID" value="NM_032990.2"/>
</dbReference>
<dbReference type="PDB" id="3DLN">
    <property type="method" value="X-ray"/>
    <property type="resolution" value="1.91 A"/>
    <property type="chains" value="A=416-530, A=658-799"/>
</dbReference>
<dbReference type="PDB" id="3DP4">
    <property type="method" value="X-ray"/>
    <property type="resolution" value="2.11 A"/>
    <property type="chains" value="A=416-530, A=658-799"/>
</dbReference>
<dbReference type="PDB" id="3LSW">
    <property type="method" value="X-ray"/>
    <property type="resolution" value="1.75 A"/>
    <property type="chains" value="A=417-530"/>
</dbReference>
<dbReference type="PDB" id="3LSX">
    <property type="method" value="X-ray"/>
    <property type="resolution" value="2.01 A"/>
    <property type="chains" value="A=417-530"/>
</dbReference>
<dbReference type="PDB" id="3M3F">
    <property type="method" value="X-ray"/>
    <property type="resolution" value="2.50 A"/>
    <property type="chains" value="A=417-530, A=658-799"/>
</dbReference>
<dbReference type="PDB" id="3M3K">
    <property type="method" value="X-ray"/>
    <property type="resolution" value="1.79 A"/>
    <property type="chains" value="A/C/E=417-530, A/C/E=658-799"/>
</dbReference>
<dbReference type="PDB" id="3O21">
    <property type="method" value="X-ray"/>
    <property type="resolution" value="2.20 A"/>
    <property type="chains" value="A/B/C/D=23-403"/>
</dbReference>
<dbReference type="PDB" id="3P3W">
    <property type="method" value="X-ray"/>
    <property type="resolution" value="4.20 A"/>
    <property type="chains" value="A/B/C/D=23-403"/>
</dbReference>
<dbReference type="PDB" id="3RT6">
    <property type="method" value="X-ray"/>
    <property type="resolution" value="2.84 A"/>
    <property type="chains" value="B=417-530, B=658-799"/>
</dbReference>
<dbReference type="PDB" id="3RT8">
    <property type="method" value="X-ray"/>
    <property type="resolution" value="2.43 A"/>
    <property type="chains" value="A=417-530, A=658-799"/>
</dbReference>
<dbReference type="PDB" id="4F1Y">
    <property type="method" value="X-ray"/>
    <property type="resolution" value="1.79 A"/>
    <property type="chains" value="A/C=417-530, A/C=658-799"/>
</dbReference>
<dbReference type="PDB" id="4F22">
    <property type="method" value="X-ray"/>
    <property type="resolution" value="2.06 A"/>
    <property type="chains" value="A=417-530, A=658-799"/>
</dbReference>
<dbReference type="PDB" id="4F29">
    <property type="method" value="X-ray"/>
    <property type="resolution" value="1.75 A"/>
    <property type="chains" value="A=417-530, A=658-799"/>
</dbReference>
<dbReference type="PDB" id="4F2O">
    <property type="method" value="X-ray"/>
    <property type="resolution" value="1.91 A"/>
    <property type="chains" value="A=417-530, A=658-799"/>
</dbReference>
<dbReference type="PDB" id="4F2Q">
    <property type="method" value="X-ray"/>
    <property type="resolution" value="2.20 A"/>
    <property type="chains" value="A=417-530, A=658-799"/>
</dbReference>
<dbReference type="PDB" id="4F31">
    <property type="method" value="X-ray"/>
    <property type="resolution" value="2.29 A"/>
    <property type="chains" value="B/D=417-530, B/D=658-799"/>
</dbReference>
<dbReference type="PDB" id="4F39">
    <property type="method" value="X-ray"/>
    <property type="resolution" value="1.83 A"/>
    <property type="chains" value="A=417-530, A=658-799"/>
</dbReference>
<dbReference type="PDB" id="4F3B">
    <property type="method" value="X-ray"/>
    <property type="resolution" value="1.82 A"/>
    <property type="chains" value="A=417-530, A=658-799"/>
</dbReference>
<dbReference type="PDB" id="4F3G">
    <property type="method" value="X-ray"/>
    <property type="resolution" value="2.06 A"/>
    <property type="chains" value="A=417-530, A=658-799"/>
</dbReference>
<dbReference type="PDB" id="5FWY">
    <property type="method" value="X-ray"/>
    <property type="resolution" value="2.12 A"/>
    <property type="chains" value="B/D=23-403"/>
</dbReference>
<dbReference type="PDB" id="5IDE">
    <property type="method" value="EM"/>
    <property type="resolution" value="8.25 A"/>
    <property type="chains" value="B/D=24-888"/>
</dbReference>
<dbReference type="PDB" id="5IDF">
    <property type="method" value="EM"/>
    <property type="resolution" value="10.31 A"/>
    <property type="chains" value="B/D=24-888"/>
</dbReference>
<dbReference type="PDB" id="6FLR">
    <property type="method" value="X-ray"/>
    <property type="resolution" value="2.51 A"/>
    <property type="chains" value="A/B=23-403"/>
</dbReference>
<dbReference type="PDB" id="6FPJ">
    <property type="method" value="X-ray"/>
    <property type="resolution" value="1.96 A"/>
    <property type="chains" value="A/B/C=23-403"/>
</dbReference>
<dbReference type="PDB" id="6NJM">
    <property type="method" value="EM"/>
    <property type="resolution" value="6.50 A"/>
    <property type="chains" value="A/C=1-888"/>
</dbReference>
<dbReference type="PDB" id="6NJN">
    <property type="method" value="EM"/>
    <property type="resolution" value="6.50 A"/>
    <property type="chains" value="C=1-888"/>
</dbReference>
<dbReference type="PDBsum" id="3DLN"/>
<dbReference type="PDBsum" id="3DP4"/>
<dbReference type="PDBsum" id="3LSW"/>
<dbReference type="PDBsum" id="3LSX"/>
<dbReference type="PDBsum" id="3M3F"/>
<dbReference type="PDBsum" id="3M3K"/>
<dbReference type="PDBsum" id="3O21"/>
<dbReference type="PDBsum" id="3P3W"/>
<dbReference type="PDBsum" id="3RT6"/>
<dbReference type="PDBsum" id="3RT8"/>
<dbReference type="PDBsum" id="4F1Y"/>
<dbReference type="PDBsum" id="4F22"/>
<dbReference type="PDBsum" id="4F29"/>
<dbReference type="PDBsum" id="4F2O"/>
<dbReference type="PDBsum" id="4F2Q"/>
<dbReference type="PDBsum" id="4F31"/>
<dbReference type="PDBsum" id="4F39"/>
<dbReference type="PDBsum" id="4F3B"/>
<dbReference type="PDBsum" id="4F3G"/>
<dbReference type="PDBsum" id="5FWY"/>
<dbReference type="PDBsum" id="5IDE"/>
<dbReference type="PDBsum" id="5IDF"/>
<dbReference type="PDBsum" id="6FLR"/>
<dbReference type="PDBsum" id="6FPJ"/>
<dbReference type="PDBsum" id="6NJM"/>
<dbReference type="PDBsum" id="6NJN"/>
<dbReference type="EMDB" id="EMD-8090"/>
<dbReference type="EMDB" id="EMD-8091"/>
<dbReference type="EMDB" id="EMD-9388"/>
<dbReference type="EMDB" id="EMD-9389"/>
<dbReference type="SMR" id="P19492"/>
<dbReference type="BioGRID" id="248251">
    <property type="interactions" value="5"/>
</dbReference>
<dbReference type="CORUM" id="P19492"/>
<dbReference type="DIP" id="DIP-30954N"/>
<dbReference type="FunCoup" id="P19492">
    <property type="interactions" value="1200"/>
</dbReference>
<dbReference type="IntAct" id="P19492">
    <property type="interactions" value="10"/>
</dbReference>
<dbReference type="MINT" id="P19492"/>
<dbReference type="STRING" id="10116.ENSRNOP00000010367"/>
<dbReference type="BindingDB" id="P19492"/>
<dbReference type="ChEMBL" id="CHEMBL3504"/>
<dbReference type="DrugCentral" id="P19492"/>
<dbReference type="GlyCosmos" id="P19492">
    <property type="glycosylation" value="5 sites, 5 glycans"/>
</dbReference>
<dbReference type="GlyGen" id="P19492">
    <property type="glycosylation" value="6 sites, 5 N-linked glycans (1 site)"/>
</dbReference>
<dbReference type="iPTMnet" id="P19492"/>
<dbReference type="PhosphoSitePlus" id="P19492"/>
<dbReference type="SwissPalm" id="P19492"/>
<dbReference type="PaxDb" id="10116-ENSRNOP00000010367"/>
<dbReference type="GeneID" id="29628"/>
<dbReference type="KEGG" id="rno:29628"/>
<dbReference type="UCSC" id="RGD:70958">
    <molecule id="P19492-1"/>
    <property type="organism name" value="rat"/>
</dbReference>
<dbReference type="AGR" id="RGD:70958"/>
<dbReference type="CTD" id="2892"/>
<dbReference type="RGD" id="70958">
    <property type="gene designation" value="Gria3"/>
</dbReference>
<dbReference type="eggNOG" id="KOG1054">
    <property type="taxonomic scope" value="Eukaryota"/>
</dbReference>
<dbReference type="InParanoid" id="P19492"/>
<dbReference type="PhylomeDB" id="P19492"/>
<dbReference type="Reactome" id="R-RNO-399710">
    <property type="pathway name" value="Activation of AMPA receptors"/>
</dbReference>
<dbReference type="Reactome" id="R-RNO-399719">
    <property type="pathway name" value="Trafficking of AMPA receptors"/>
</dbReference>
<dbReference type="Reactome" id="R-RNO-416993">
    <property type="pathway name" value="Trafficking of GluR2-containing AMPA receptors"/>
</dbReference>
<dbReference type="Reactome" id="R-RNO-438066">
    <property type="pathway name" value="Unblocking of NMDA receptors, glutamate binding and activation"/>
</dbReference>
<dbReference type="Reactome" id="R-RNO-8849932">
    <property type="pathway name" value="Synaptic adhesion-like molecules"/>
</dbReference>
<dbReference type="EvolutionaryTrace" id="P19492"/>
<dbReference type="PRO" id="PR:P19492"/>
<dbReference type="Proteomes" id="UP000002494">
    <property type="component" value="Unplaced"/>
</dbReference>
<dbReference type="GO" id="GO:0032281">
    <property type="term" value="C:AMPA glutamate receptor complex"/>
    <property type="evidence" value="ECO:0000314"/>
    <property type="project" value="UniProtKB"/>
</dbReference>
<dbReference type="GO" id="GO:0032279">
    <property type="term" value="C:asymmetric synapse"/>
    <property type="evidence" value="ECO:0000314"/>
    <property type="project" value="RGD"/>
</dbReference>
<dbReference type="GO" id="GO:0030425">
    <property type="term" value="C:dendrite"/>
    <property type="evidence" value="ECO:0000314"/>
    <property type="project" value="RGD"/>
</dbReference>
<dbReference type="GO" id="GO:0043198">
    <property type="term" value="C:dendritic shaft"/>
    <property type="evidence" value="ECO:0000314"/>
    <property type="project" value="RGD"/>
</dbReference>
<dbReference type="GO" id="GO:0043197">
    <property type="term" value="C:dendritic spine"/>
    <property type="evidence" value="ECO:0000314"/>
    <property type="project" value="UniProtKB"/>
</dbReference>
<dbReference type="GO" id="GO:0098978">
    <property type="term" value="C:glutamatergic synapse"/>
    <property type="evidence" value="ECO:0000314"/>
    <property type="project" value="SynGO"/>
</dbReference>
<dbReference type="GO" id="GO:0008328">
    <property type="term" value="C:ionotropic glutamate receptor complex"/>
    <property type="evidence" value="ECO:0000304"/>
    <property type="project" value="UniProtKB"/>
</dbReference>
<dbReference type="GO" id="GO:0016020">
    <property type="term" value="C:membrane"/>
    <property type="evidence" value="ECO:0000266"/>
    <property type="project" value="RGD"/>
</dbReference>
<dbReference type="GO" id="GO:0043025">
    <property type="term" value="C:neuronal cell body"/>
    <property type="evidence" value="ECO:0000314"/>
    <property type="project" value="RGD"/>
</dbReference>
<dbReference type="GO" id="GO:0098688">
    <property type="term" value="C:parallel fiber to Purkinje cell synapse"/>
    <property type="evidence" value="ECO:0000266"/>
    <property type="project" value="RGD"/>
</dbReference>
<dbReference type="GO" id="GO:0043204">
    <property type="term" value="C:perikaryon"/>
    <property type="evidence" value="ECO:0000314"/>
    <property type="project" value="RGD"/>
</dbReference>
<dbReference type="GO" id="GO:0005886">
    <property type="term" value="C:plasma membrane"/>
    <property type="evidence" value="ECO:0000266"/>
    <property type="project" value="RGD"/>
</dbReference>
<dbReference type="GO" id="GO:0014069">
    <property type="term" value="C:postsynaptic density"/>
    <property type="evidence" value="ECO:0000314"/>
    <property type="project" value="UniProtKB"/>
</dbReference>
<dbReference type="GO" id="GO:0098839">
    <property type="term" value="C:postsynaptic density membrane"/>
    <property type="evidence" value="ECO:0000314"/>
    <property type="project" value="SynGO"/>
</dbReference>
<dbReference type="GO" id="GO:0045211">
    <property type="term" value="C:postsynaptic membrane"/>
    <property type="evidence" value="ECO:0000314"/>
    <property type="project" value="UniProtKB"/>
</dbReference>
<dbReference type="GO" id="GO:0048787">
    <property type="term" value="C:presynaptic active zone membrane"/>
    <property type="evidence" value="ECO:0000314"/>
    <property type="project" value="SynGO"/>
</dbReference>
<dbReference type="GO" id="GO:0042734">
    <property type="term" value="C:presynaptic membrane"/>
    <property type="evidence" value="ECO:0000314"/>
    <property type="project" value="SynGO"/>
</dbReference>
<dbReference type="GO" id="GO:0032991">
    <property type="term" value="C:protein-containing complex"/>
    <property type="evidence" value="ECO:0000353"/>
    <property type="project" value="UniProtKB"/>
</dbReference>
<dbReference type="GO" id="GO:0043083">
    <property type="term" value="C:synaptic cleft"/>
    <property type="evidence" value="ECO:0000314"/>
    <property type="project" value="RGD"/>
</dbReference>
<dbReference type="GO" id="GO:0043195">
    <property type="term" value="C:terminal bouton"/>
    <property type="evidence" value="ECO:0000314"/>
    <property type="project" value="RGD"/>
</dbReference>
<dbReference type="GO" id="GO:0004971">
    <property type="term" value="F:AMPA glutamate receptor activity"/>
    <property type="evidence" value="ECO:0000314"/>
    <property type="project" value="RGD"/>
</dbReference>
<dbReference type="GO" id="GO:0001540">
    <property type="term" value="F:amyloid-beta binding"/>
    <property type="evidence" value="ECO:0000353"/>
    <property type="project" value="ARUK-UCL"/>
</dbReference>
<dbReference type="GO" id="GO:0022849">
    <property type="term" value="F:glutamate-gated calcium ion channel activity"/>
    <property type="evidence" value="ECO:0000314"/>
    <property type="project" value="UniProtKB"/>
</dbReference>
<dbReference type="GO" id="GO:0004970">
    <property type="term" value="F:glutamate-gated receptor activity"/>
    <property type="evidence" value="ECO:0000314"/>
    <property type="project" value="UniProtKB"/>
</dbReference>
<dbReference type="GO" id="GO:0099507">
    <property type="term" value="F:ligand-gated monoatomic ion channel activity involved in regulation of presynaptic membrane potential"/>
    <property type="evidence" value="ECO:0000266"/>
    <property type="project" value="RGD"/>
</dbReference>
<dbReference type="GO" id="GO:1904315">
    <property type="term" value="F:transmitter-gated monoatomic ion channel activity involved in regulation of postsynaptic membrane potential"/>
    <property type="evidence" value="ECO:0000266"/>
    <property type="project" value="RGD"/>
</dbReference>
<dbReference type="GO" id="GO:0060291">
    <property type="term" value="P:long-term synaptic potentiation"/>
    <property type="evidence" value="ECO:0000250"/>
    <property type="project" value="UniProtKB"/>
</dbReference>
<dbReference type="GO" id="GO:0050804">
    <property type="term" value="P:modulation of chemical synaptic transmission"/>
    <property type="evidence" value="ECO:0000318"/>
    <property type="project" value="GO_Central"/>
</dbReference>
<dbReference type="GO" id="GO:0051290">
    <property type="term" value="P:protein heterotetramerization"/>
    <property type="evidence" value="ECO:0000250"/>
    <property type="project" value="UniProtKB"/>
</dbReference>
<dbReference type="GO" id="GO:0051289">
    <property type="term" value="P:protein homotetramerization"/>
    <property type="evidence" value="ECO:0000250"/>
    <property type="project" value="UniProtKB"/>
</dbReference>
<dbReference type="GO" id="GO:0001919">
    <property type="term" value="P:regulation of receptor recycling"/>
    <property type="evidence" value="ECO:0000315"/>
    <property type="project" value="UniProtKB"/>
</dbReference>
<dbReference type="GO" id="GO:0060992">
    <property type="term" value="P:response to fungicide"/>
    <property type="evidence" value="ECO:0000270"/>
    <property type="project" value="RGD"/>
</dbReference>
<dbReference type="GO" id="GO:0010226">
    <property type="term" value="P:response to lithium ion"/>
    <property type="evidence" value="ECO:0000270"/>
    <property type="project" value="UniProtKB"/>
</dbReference>
<dbReference type="GO" id="GO:0035249">
    <property type="term" value="P:synaptic transmission, glutamatergic"/>
    <property type="evidence" value="ECO:0000318"/>
    <property type="project" value="GO_Central"/>
</dbReference>
<dbReference type="CDD" id="cd06387">
    <property type="entry name" value="PBP1_iGluR_AMPA_GluR3"/>
    <property type="match status" value="1"/>
</dbReference>
<dbReference type="CDD" id="cd13715">
    <property type="entry name" value="PBP2_iGluR_AMPA"/>
    <property type="match status" value="1"/>
</dbReference>
<dbReference type="FunFam" id="1.10.287.70:FF:000067">
    <property type="entry name" value="glutamate receptor 2 isoform X1"/>
    <property type="match status" value="1"/>
</dbReference>
<dbReference type="FunFam" id="1.10.287.70:FF:000099">
    <property type="entry name" value="glutamate receptor 2 isoform X1"/>
    <property type="match status" value="1"/>
</dbReference>
<dbReference type="FunFam" id="3.40.190.10:FF:000001">
    <property type="entry name" value="Glutamate receptor ionotropic, kainate 2"/>
    <property type="match status" value="1"/>
</dbReference>
<dbReference type="FunFam" id="3.40.50.2300:FF:000004">
    <property type="entry name" value="Glutamate receptor, ionotropic, AMPA 2"/>
    <property type="match status" value="1"/>
</dbReference>
<dbReference type="FunFam" id="3.40.190.10:FF:000666">
    <property type="entry name" value="Glutamate receptor, ionotropic, AMPA 2a"/>
    <property type="match status" value="1"/>
</dbReference>
<dbReference type="Gene3D" id="1.10.287.70">
    <property type="match status" value="2"/>
</dbReference>
<dbReference type="Gene3D" id="3.40.50.2300">
    <property type="match status" value="2"/>
</dbReference>
<dbReference type="Gene3D" id="3.40.190.10">
    <property type="entry name" value="Periplasmic binding protein-like II"/>
    <property type="match status" value="2"/>
</dbReference>
<dbReference type="InterPro" id="IPR001828">
    <property type="entry name" value="ANF_lig-bd_rcpt"/>
</dbReference>
<dbReference type="InterPro" id="IPR019594">
    <property type="entry name" value="Glu/Gly-bd"/>
</dbReference>
<dbReference type="InterPro" id="IPR001508">
    <property type="entry name" value="Iono_Glu_rcpt_met"/>
</dbReference>
<dbReference type="InterPro" id="IPR015683">
    <property type="entry name" value="Ionotropic_Glu_rcpt"/>
</dbReference>
<dbReference type="InterPro" id="IPR001320">
    <property type="entry name" value="Iontro_rcpt_C"/>
</dbReference>
<dbReference type="InterPro" id="IPR028082">
    <property type="entry name" value="Peripla_BP_I"/>
</dbReference>
<dbReference type="PANTHER" id="PTHR18966">
    <property type="entry name" value="IONOTROPIC GLUTAMATE RECEPTOR"/>
    <property type="match status" value="1"/>
</dbReference>
<dbReference type="Pfam" id="PF01094">
    <property type="entry name" value="ANF_receptor"/>
    <property type="match status" value="1"/>
</dbReference>
<dbReference type="Pfam" id="PF00060">
    <property type="entry name" value="Lig_chan"/>
    <property type="match status" value="1"/>
</dbReference>
<dbReference type="Pfam" id="PF10613">
    <property type="entry name" value="Lig_chan-Glu_bd"/>
    <property type="match status" value="1"/>
</dbReference>
<dbReference type="PRINTS" id="PR00177">
    <property type="entry name" value="NMDARECEPTOR"/>
</dbReference>
<dbReference type="SMART" id="SM00918">
    <property type="entry name" value="Lig_chan-Glu_bd"/>
    <property type="match status" value="1"/>
</dbReference>
<dbReference type="SMART" id="SM00079">
    <property type="entry name" value="PBPe"/>
    <property type="match status" value="1"/>
</dbReference>
<dbReference type="SUPFAM" id="SSF53822">
    <property type="entry name" value="Periplasmic binding protein-like I"/>
    <property type="match status" value="1"/>
</dbReference>
<dbReference type="SUPFAM" id="SSF53850">
    <property type="entry name" value="Periplasmic binding protein-like II"/>
    <property type="match status" value="1"/>
</dbReference>
<dbReference type="SUPFAM" id="SSF81324">
    <property type="entry name" value="Voltage-gated potassium channels"/>
    <property type="match status" value="1"/>
</dbReference>
<reference key="1">
    <citation type="journal article" date="1990" name="Science">
        <title>A family of AMPA-selective glutamate receptors.</title>
        <authorList>
            <person name="Keinaenen K."/>
            <person name="Wisden W."/>
            <person name="Sommer B."/>
            <person name="Werner P."/>
            <person name="Herb A."/>
            <person name="Verdoorn T.A."/>
            <person name="Sakmann B."/>
            <person name="Seeburg P.H."/>
        </authorList>
    </citation>
    <scope>NUCLEOTIDE SEQUENCE [MRNA]</scope>
    <scope>FUNCTION</scope>
    <source>
        <tissue>Brain</tissue>
    </source>
</reference>
<reference key="2">
    <citation type="journal article" date="1990" name="Science">
        <title>Molecular cloning and functional expression of glutamate receptor subunit genes.</title>
        <authorList>
            <person name="Boulter J."/>
            <person name="Hollmann M."/>
            <person name="O'Shea-Greenfield A."/>
            <person name="Hartley M."/>
            <person name="Deneris E.S."/>
            <person name="Maron C."/>
            <person name="Heinemann S.F."/>
        </authorList>
    </citation>
    <scope>NUCLEOTIDE SEQUENCE [MRNA]</scope>
    <scope>FUNCTION</scope>
    <source>
        <strain>Sprague-Dawley</strain>
        <tissue>Forebrain</tissue>
    </source>
</reference>
<reference key="3">
    <citation type="journal article" date="1990" name="Neuron">
        <title>A family of glutamate receptor genes: evidence for the formation of heteromultimeric receptors with distinct channel properties.</title>
        <authorList>
            <person name="Nakanishi N."/>
            <person name="Schneider N.A."/>
            <person name="Axel R."/>
        </authorList>
    </citation>
    <scope>NUCLEOTIDE SEQUENCE [MRNA] (VARIANT FLIP)</scope>
    <scope>FUNCTION</scope>
    <source>
        <tissue>Brain cortex</tissue>
        <tissue>Hippocampus</tissue>
    </source>
</reference>
<reference key="4">
    <citation type="journal article" date="1990" name="Science">
        <title>Flip and flop: a cell-specific functional switch in glutamate-operated channels of the CNS.</title>
        <authorList>
            <person name="Sommer B."/>
            <person name="Keinaenen K."/>
            <person name="Verdoorn T.A."/>
            <person name="Wisden W."/>
            <person name="Burnashev N."/>
            <person name="Herb A."/>
            <person name="Koehler M."/>
            <person name="Takagi T."/>
            <person name="Sakmann B."/>
            <person name="Seeburg P.H."/>
        </authorList>
    </citation>
    <scope>ALTERNATIVE SPLICING (ISOFORMS FLIP AND FLOP)</scope>
    <source>
        <tissue>Brain</tissue>
    </source>
</reference>
<reference key="5">
    <citation type="journal article" date="1991" name="Science">
        <title>Ca2+ permeability of KA-AMPA--gated glutamate receptor channels depends on subunit composition.</title>
        <authorList>
            <person name="Hollmann M."/>
            <person name="Hartley M."/>
            <person name="Heinemann S."/>
        </authorList>
    </citation>
    <scope>FUNCTION</scope>
    <scope>CATALYTIC ACTIVITY</scope>
</reference>
<reference key="6">
    <citation type="journal article" date="1999" name="Neuron">
        <title>Clustering of AMPA receptors by the synaptic PDZ domain-containing protein PICK1.</title>
        <authorList>
            <person name="Xia J."/>
            <person name="Zhang X."/>
            <person name="Staudinger J."/>
            <person name="Huganir R.L."/>
        </authorList>
    </citation>
    <scope>INTERACTION WITH PICK1</scope>
    <scope>SUBCELLULAR LOCATION</scope>
</reference>
<reference key="7">
    <citation type="journal article" date="1997" name="Nature">
        <title>GRIP: a synaptic PDZ domain-containing protein that interacts with AMPA receptors.</title>
        <authorList>
            <person name="Dong H."/>
            <person name="O'Brien R.J."/>
            <person name="Fung E.T."/>
            <person name="Lanahan A.A."/>
            <person name="Worley P.F."/>
            <person name="Huganir R.L."/>
        </authorList>
    </citation>
    <scope>INTERACTION WITH GRIP1</scope>
    <source>
        <tissue>Hippocampus</tissue>
    </source>
</reference>
<reference key="8">
    <citation type="journal article" date="1999" name="J. Neurosci.">
        <title>Association of AMPA receptors with a subset of glutamate receptor-interacting protein in vivo.</title>
        <authorList>
            <person name="Wyszynski M."/>
            <person name="Valtschanoff J.G."/>
            <person name="Naisbitt S."/>
            <person name="Dunah A.W."/>
            <person name="Kim E."/>
            <person name="Standaert D.G."/>
            <person name="Weinberg R."/>
            <person name="Sheng M."/>
        </authorList>
    </citation>
    <scope>INTERACTION WITH GRIP2</scope>
</reference>
<reference key="9">
    <citation type="journal article" date="2003" name="J. Comp. Neurol.">
        <title>Glutamate receptor subunit 3 (GluR3) immunoreactivity delineates a subpopulation of parvalbumin-containing interneurons in the rat hippocampus.</title>
        <authorList>
            <person name="Moga D.E."/>
            <person name="Janssen W.G."/>
            <person name="Vissavajjhala P."/>
            <person name="Czelusniak S.M."/>
            <person name="Moran T.M."/>
            <person name="Hof P.R."/>
            <person name="Morrison J.H."/>
        </authorList>
    </citation>
    <scope>SUBCELLULAR LOCATION</scope>
</reference>
<reference key="10">
    <citation type="journal article" date="2008" name="Neuron">
        <title>AMPA receptor subunit-specific regulation by a distinct family of type II TARPs.</title>
        <authorList>
            <person name="Kato A.S."/>
            <person name="Siuda E.R."/>
            <person name="Nisenbaum E.S."/>
            <person name="Bredt D.S."/>
        </authorList>
    </citation>
    <scope>INTERACTION WITH CACNG5</scope>
</reference>
<reference key="11">
    <citation type="journal article" date="2009" name="Science">
        <title>Functional proteomics identify cornichon proteins as auxiliary subunits of AMPA receptors.</title>
        <authorList>
            <person name="Schwenk J."/>
            <person name="Harmel N."/>
            <person name="Zolles G."/>
            <person name="Bildl W."/>
            <person name="Kulik A."/>
            <person name="Heimrich B."/>
            <person name="Chisaka O."/>
            <person name="Jonas P."/>
            <person name="Schulte U."/>
            <person name="Fakler B."/>
            <person name="Kloecker N."/>
        </authorList>
    </citation>
    <scope>SUBUNIT</scope>
    <scope>IDENTIFICATION BY MASS SPECTROMETRY</scope>
</reference>
<reference key="12">
    <citation type="journal article" date="2013" name="J. Proteome Res.">
        <title>Site-specific glycan-peptide analysis for determination of N-glycoproteome heterogeneity.</title>
        <authorList>
            <person name="Parker B.L."/>
            <person name="Thaysen-Andersen M."/>
            <person name="Solis N."/>
            <person name="Scott N.E."/>
            <person name="Larsen M.R."/>
            <person name="Graham M.E."/>
            <person name="Packer N.H."/>
            <person name="Cordwell S.J."/>
        </authorList>
    </citation>
    <scope>GLYCOSYLATION [LARGE SCALE ANALYSIS] AT ASN-260</scope>
    <scope>IDENTIFICATION BY MASS SPECTROMETRY [LARGE SCALE ANALYSIS]</scope>
    <source>
        <tissue>Brain</tissue>
    </source>
</reference>
<reference key="13">
    <citation type="journal article" date="2015" name="Hippocampus">
        <title>The organization of AMPA receptor subunits at the postsynaptic membrane.</title>
        <authorList>
            <person name="Jacob A.L."/>
            <person name="Weinberg R.J."/>
        </authorList>
    </citation>
    <scope>SUBCELLULAR LOCATION</scope>
</reference>
<reference evidence="24 25" key="14">
    <citation type="journal article" date="2009" name="Proteins">
        <title>Structure of the S1S2 glutamate binding domain of GLuR3.</title>
        <authorList>
            <person name="Ahmed A.H."/>
            <person name="Wang Q."/>
            <person name="Sondermann H."/>
            <person name="Oswald R.E."/>
        </authorList>
    </citation>
    <scope>X-RAY CRYSTALLOGRAPHY (1.91 ANGSTROMS) OF 407-800 IN COMPLEX WITH GLUTAMATE</scope>
    <scope>DISULFIDE BOND</scope>
</reference>
<reference evidence="26 27" key="15">
    <citation type="journal article" date="2010" name="Biochemistry">
        <title>Molecular mechanism of flop selectivity and subsite recognition for an AMPA receptor allosteric modulator: structures of GluA2 and GluA3 in complexes with PEPA.</title>
        <authorList>
            <person name="Ahmed A.H."/>
            <person name="Ptak C.P."/>
            <person name="Oswald R.E."/>
        </authorList>
    </citation>
    <scope>X-RAY CRYSTALLOGRAPHY (1.79 ANGSTROMS) OF 417-799 IN COMPLEX WITH GLUTAMATE</scope>
    <scope>DISULFIDE BOND</scope>
</reference>
<reference evidence="28 29" key="16">
    <citation type="journal article" date="2011" name="EMBO J.">
        <title>Dynamics and allosteric potential of the AMPA receptor N-terminal domain.</title>
        <authorList>
            <person name="Sukumaran M."/>
            <person name="Rossmann M."/>
            <person name="Shrivastava I."/>
            <person name="Dutta A."/>
            <person name="Bahar I."/>
            <person name="Greger I.H."/>
        </authorList>
    </citation>
    <scope>X-RAY CRYSTALLOGRAPHY (2.20 ANGSTROMS) OF 23-403</scope>
    <scope>SUBUNIT</scope>
    <scope>DISULFIDE BOND</scope>
    <scope>GLYCOSYLATION AT ASN-260 AND ASN-374</scope>
</reference>
<gene>
    <name evidence="23" type="primary">Gria3</name>
    <name type="synonym">GluA3</name>
    <name type="synonym">Glur3</name>
</gene>
<name>GRIA3_RAT</name>
<evidence type="ECO:0000250" key="1"/>
<evidence type="ECO:0000250" key="2">
    <source>
        <dbReference type="UniProtKB" id="P23819"/>
    </source>
</evidence>
<evidence type="ECO:0000250" key="3">
    <source>
        <dbReference type="UniProtKB" id="P42262"/>
    </source>
</evidence>
<evidence type="ECO:0000250" key="4">
    <source>
        <dbReference type="UniProtKB" id="P42263"/>
    </source>
</evidence>
<evidence type="ECO:0000250" key="5">
    <source>
        <dbReference type="UniProtKB" id="Q9Z2W9"/>
    </source>
</evidence>
<evidence type="ECO:0000255" key="6"/>
<evidence type="ECO:0000269" key="7">
    <source>
    </source>
</evidence>
<evidence type="ECO:0000269" key="8">
    <source>
    </source>
</evidence>
<evidence type="ECO:0000269" key="9">
    <source>
    </source>
</evidence>
<evidence type="ECO:0000269" key="10">
    <source>
    </source>
</evidence>
<evidence type="ECO:0000269" key="11">
    <source>
    </source>
</evidence>
<evidence type="ECO:0000269" key="12">
    <source>
    </source>
</evidence>
<evidence type="ECO:0000269" key="13">
    <source>
    </source>
</evidence>
<evidence type="ECO:0000269" key="14">
    <source>
    </source>
</evidence>
<evidence type="ECO:0000269" key="15">
    <source>
    </source>
</evidence>
<evidence type="ECO:0000269" key="16">
    <source>
    </source>
</evidence>
<evidence type="ECO:0000269" key="17">
    <source>
    </source>
</evidence>
<evidence type="ECO:0000269" key="18">
    <source>
    </source>
</evidence>
<evidence type="ECO:0000269" key="19">
    <source>
    </source>
</evidence>
<evidence type="ECO:0000303" key="20">
    <source>
    </source>
</evidence>
<evidence type="ECO:0000305" key="21"/>
<evidence type="ECO:0000305" key="22">
    <source>
    </source>
</evidence>
<evidence type="ECO:0000312" key="23">
    <source>
        <dbReference type="RGD" id="70958"/>
    </source>
</evidence>
<evidence type="ECO:0007744" key="24">
    <source>
        <dbReference type="PDB" id="3DLN"/>
    </source>
</evidence>
<evidence type="ECO:0007744" key="25">
    <source>
        <dbReference type="PDB" id="3DP4"/>
    </source>
</evidence>
<evidence type="ECO:0007744" key="26">
    <source>
        <dbReference type="PDB" id="3M3F"/>
    </source>
</evidence>
<evidence type="ECO:0007744" key="27">
    <source>
        <dbReference type="PDB" id="3M3K"/>
    </source>
</evidence>
<evidence type="ECO:0007744" key="28">
    <source>
        <dbReference type="PDB" id="3O21"/>
    </source>
</evidence>
<evidence type="ECO:0007744" key="29">
    <source>
        <dbReference type="PDB" id="3P3W"/>
    </source>
</evidence>
<evidence type="ECO:0007744" key="30">
    <source>
    </source>
</evidence>
<evidence type="ECO:0007829" key="31">
    <source>
        <dbReference type="PDB" id="3O21"/>
    </source>
</evidence>
<evidence type="ECO:0007829" key="32">
    <source>
        <dbReference type="PDB" id="4F29"/>
    </source>
</evidence>
<evidence type="ECO:0007829" key="33">
    <source>
        <dbReference type="PDB" id="4F31"/>
    </source>
</evidence>
<evidence type="ECO:0007829" key="34">
    <source>
        <dbReference type="PDB" id="5FWY"/>
    </source>
</evidence>
<evidence type="ECO:0007829" key="35">
    <source>
        <dbReference type="PDB" id="6FPJ"/>
    </source>
</evidence>
<feature type="signal peptide" evidence="6">
    <location>
        <begin position="1"/>
        <end position="22"/>
    </location>
</feature>
<feature type="chain" id="PRO_0000011537" description="Glutamate receptor 3">
    <location>
        <begin position="23"/>
        <end position="888"/>
    </location>
</feature>
<feature type="topological domain" description="Extracellular" evidence="1">
    <location>
        <begin position="23"/>
        <end position="546"/>
    </location>
</feature>
<feature type="transmembrane region" description="Helical" evidence="1">
    <location>
        <begin position="547"/>
        <end position="567"/>
    </location>
</feature>
<feature type="topological domain" description="Cytoplasmic" evidence="1">
    <location>
        <begin position="568"/>
        <end position="596"/>
    </location>
</feature>
<feature type="intramembrane region" description="Helical; Pore-forming" evidence="1">
    <location>
        <begin position="597"/>
        <end position="612"/>
    </location>
</feature>
<feature type="intramembrane region" evidence="1">
    <location>
        <begin position="613"/>
        <end position="615"/>
    </location>
</feature>
<feature type="topological domain" description="Cytoplasmic" evidence="1">
    <location>
        <begin position="616"/>
        <end position="621"/>
    </location>
</feature>
<feature type="transmembrane region" description="Helical" evidence="1">
    <location>
        <begin position="622"/>
        <end position="642"/>
    </location>
</feature>
<feature type="topological domain" description="Extracellular" evidence="1">
    <location>
        <begin position="643"/>
        <end position="817"/>
    </location>
</feature>
<feature type="transmembrane region" description="Helical; Name=M4" evidence="1">
    <location>
        <begin position="818"/>
        <end position="838"/>
    </location>
</feature>
<feature type="topological domain" description="Cytoplasmic" evidence="1">
    <location>
        <begin position="839"/>
        <end position="888"/>
    </location>
</feature>
<feature type="binding site" evidence="12 14 24 26 27">
    <location>
        <position position="502"/>
    </location>
    <ligand>
        <name>L-glutamate</name>
        <dbReference type="ChEBI" id="CHEBI:29985"/>
    </ligand>
</feature>
<feature type="binding site" evidence="12 14 24 26 27">
    <location>
        <position position="504"/>
    </location>
    <ligand>
        <name>L-glutamate</name>
        <dbReference type="ChEBI" id="CHEBI:29985"/>
    </ligand>
</feature>
<feature type="binding site" evidence="12 14 24 26 27">
    <location>
        <position position="509"/>
    </location>
    <ligand>
        <name>L-glutamate</name>
        <dbReference type="ChEBI" id="CHEBI:29985"/>
    </ligand>
</feature>
<feature type="binding site" evidence="12 14 24 26 27">
    <location>
        <position position="680"/>
    </location>
    <ligand>
        <name>L-glutamate</name>
        <dbReference type="ChEBI" id="CHEBI:29985"/>
    </ligand>
</feature>
<feature type="binding site" evidence="12 14 24 26 27">
    <location>
        <position position="681"/>
    </location>
    <ligand>
        <name>L-glutamate</name>
        <dbReference type="ChEBI" id="CHEBI:29985"/>
    </ligand>
</feature>
<feature type="binding site" evidence="12 14 24 26 27">
    <location>
        <position position="731"/>
    </location>
    <ligand>
        <name>L-glutamate</name>
        <dbReference type="ChEBI" id="CHEBI:29985"/>
    </ligand>
</feature>
<feature type="modified residue" description="Phosphotyrosine" evidence="5">
    <location>
        <position position="871"/>
    </location>
</feature>
<feature type="modified residue" description="Phosphotyrosine" evidence="5">
    <location>
        <position position="881"/>
    </location>
</feature>
<feature type="lipid moiety-binding region" description="S-palmitoyl cysteine" evidence="2">
    <location>
        <position position="615"/>
    </location>
</feature>
<feature type="lipid moiety-binding region" description="S-palmitoyl cysteine" evidence="5">
    <location>
        <position position="841"/>
    </location>
</feature>
<feature type="glycosylation site" description="N-linked (GlcNAc...) asparagine" evidence="6">
    <location>
        <position position="57"/>
    </location>
</feature>
<feature type="glycosylation site" description="N-linked (GlcNAc...) asparagine" evidence="15 30">
    <location>
        <position position="260"/>
    </location>
</feature>
<feature type="glycosylation site" description="N-linked (GlcNAc...) asparagine" evidence="15">
    <location>
        <position position="374"/>
    </location>
</feature>
<feature type="glycosylation site" description="N-linked (GlcNAc...) asparagine" evidence="6">
    <location>
        <position position="409"/>
    </location>
</feature>
<feature type="glycosylation site" description="N-linked (GlcNAc...) asparagine" evidence="6">
    <location>
        <position position="416"/>
    </location>
</feature>
<feature type="disulfide bond" evidence="3">
    <location>
        <begin position="85"/>
        <end position="334"/>
    </location>
</feature>
<feature type="disulfide bond" evidence="5">
    <location>
        <begin position="744"/>
        <end position="799"/>
    </location>
</feature>
<feature type="splice variant" id="VSP_000119" description="In isoform Flip." evidence="21">
    <original>NA</original>
    <variation>TP</variation>
    <location>
        <begin position="770"/>
        <end position="771"/>
    </location>
</feature>
<feature type="splice variant" id="VSP_000120" description="In isoform Flip." evidence="21">
    <original>N</original>
    <variation>S</variation>
    <location>
        <position position="780"/>
    </location>
</feature>
<feature type="splice variant" id="VSP_000121" description="In isoform Flip." evidence="21">
    <original>L</original>
    <variation>I</variation>
    <location>
        <position position="784"/>
    </location>
</feature>
<feature type="splice variant" id="VSP_000122" description="In isoform Flip." evidence="21">
    <original>SGGGD</original>
    <variation>AKDSG</variation>
    <location>
        <begin position="801"/>
        <end position="805"/>
    </location>
</feature>
<feature type="sequence conflict" description="In Ref. 2." evidence="21" ref="2">
    <original>KP</original>
    <variation>NA</variation>
    <location>
        <begin position="517"/>
        <end position="518"/>
    </location>
</feature>
<feature type="strand" evidence="35">
    <location>
        <begin position="26"/>
        <end position="35"/>
    </location>
</feature>
<feature type="helix" evidence="35">
    <location>
        <begin position="39"/>
        <end position="53"/>
    </location>
</feature>
<feature type="turn" evidence="35">
    <location>
        <begin position="58"/>
        <end position="60"/>
    </location>
</feature>
<feature type="strand" evidence="35">
    <location>
        <begin position="62"/>
        <end position="73"/>
    </location>
</feature>
<feature type="helix" evidence="35">
    <location>
        <begin position="77"/>
        <end position="90"/>
    </location>
</feature>
<feature type="strand" evidence="35">
    <location>
        <begin position="95"/>
        <end position="97"/>
    </location>
</feature>
<feature type="turn" evidence="35">
    <location>
        <begin position="101"/>
        <end position="103"/>
    </location>
</feature>
<feature type="helix" evidence="35">
    <location>
        <begin position="104"/>
        <end position="113"/>
    </location>
</feature>
<feature type="strand" evidence="35">
    <location>
        <begin position="118"/>
        <end position="120"/>
    </location>
</feature>
<feature type="strand" evidence="35">
    <location>
        <begin position="130"/>
        <end position="134"/>
    </location>
</feature>
<feature type="helix" evidence="35">
    <location>
        <begin position="140"/>
        <end position="149"/>
    </location>
</feature>
<feature type="strand" evidence="35">
    <location>
        <begin position="154"/>
        <end position="159"/>
    </location>
</feature>
<feature type="helix" evidence="35">
    <location>
        <begin position="166"/>
        <end position="178"/>
    </location>
</feature>
<feature type="strand" evidence="35">
    <location>
        <begin position="181"/>
        <end position="186"/>
    </location>
</feature>
<feature type="helix" evidence="35">
    <location>
        <begin position="193"/>
        <end position="205"/>
    </location>
</feature>
<feature type="strand" evidence="35">
    <location>
        <begin position="210"/>
        <end position="215"/>
    </location>
</feature>
<feature type="helix" evidence="35">
    <location>
        <begin position="217"/>
        <end position="230"/>
    </location>
</feature>
<feature type="strand" evidence="35">
    <location>
        <begin position="232"/>
        <end position="234"/>
    </location>
</feature>
<feature type="strand" evidence="35">
    <location>
        <begin position="238"/>
        <end position="241"/>
    </location>
</feature>
<feature type="helix" evidence="35">
    <location>
        <begin position="246"/>
        <end position="248"/>
    </location>
</feature>
<feature type="helix" evidence="35">
    <location>
        <begin position="252"/>
        <end position="256"/>
    </location>
</feature>
<feature type="strand" evidence="35">
    <location>
        <begin position="260"/>
        <end position="266"/>
    </location>
</feature>
<feature type="helix" evidence="35">
    <location>
        <begin position="272"/>
        <end position="281"/>
    </location>
</feature>
<feature type="turn" evidence="35">
    <location>
        <begin position="286"/>
        <end position="288"/>
    </location>
</feature>
<feature type="strand" evidence="35">
    <location>
        <begin position="292"/>
        <end position="295"/>
    </location>
</feature>
<feature type="helix" evidence="35">
    <location>
        <begin position="299"/>
        <end position="320"/>
    </location>
</feature>
<feature type="strand" evidence="34">
    <location>
        <begin position="327"/>
        <end position="329"/>
    </location>
</feature>
<feature type="strand" evidence="31">
    <location>
        <begin position="336"/>
        <end position="338"/>
    </location>
</feature>
<feature type="helix" evidence="35">
    <location>
        <begin position="345"/>
        <end position="353"/>
    </location>
</feature>
<feature type="strand" evidence="35">
    <location>
        <begin position="357"/>
        <end position="359"/>
    </location>
</feature>
<feature type="strand" evidence="35">
    <location>
        <begin position="362"/>
        <end position="366"/>
    </location>
</feature>
<feature type="strand" evidence="35">
    <location>
        <begin position="370"/>
        <end position="374"/>
    </location>
</feature>
<feature type="strand" evidence="35">
    <location>
        <begin position="377"/>
        <end position="383"/>
    </location>
</feature>
<feature type="strand" evidence="35">
    <location>
        <begin position="386"/>
        <end position="394"/>
    </location>
</feature>
<feature type="turn" evidence="35">
    <location>
        <begin position="395"/>
        <end position="397"/>
    </location>
</feature>
<feature type="strand" evidence="35">
    <location>
        <begin position="398"/>
        <end position="401"/>
    </location>
</feature>
<feature type="strand" evidence="32">
    <location>
        <begin position="418"/>
        <end position="423"/>
    </location>
</feature>
<feature type="turn" evidence="32">
    <location>
        <begin position="427"/>
        <end position="429"/>
    </location>
</feature>
<feature type="strand" evidence="32">
    <location>
        <begin position="430"/>
        <end position="432"/>
    </location>
</feature>
<feature type="helix" evidence="32">
    <location>
        <begin position="436"/>
        <end position="438"/>
    </location>
</feature>
<feature type="helix" evidence="32">
    <location>
        <begin position="441"/>
        <end position="444"/>
    </location>
</feature>
<feature type="strand" evidence="32">
    <location>
        <begin position="445"/>
        <end position="447"/>
    </location>
</feature>
<feature type="helix" evidence="32">
    <location>
        <begin position="448"/>
        <end position="460"/>
    </location>
</feature>
<feature type="strand" evidence="32">
    <location>
        <begin position="463"/>
        <end position="468"/>
    </location>
</feature>
<feature type="turn" evidence="32">
    <location>
        <begin position="479"/>
        <end position="481"/>
    </location>
</feature>
<feature type="helix" evidence="32">
    <location>
        <begin position="486"/>
        <end position="492"/>
    </location>
</feature>
<feature type="strand" evidence="32">
    <location>
        <begin position="497"/>
        <end position="499"/>
    </location>
</feature>
<feature type="helix" evidence="32">
    <location>
        <begin position="507"/>
        <end position="510"/>
    </location>
</feature>
<feature type="strand" evidence="32">
    <location>
        <begin position="513"/>
        <end position="515"/>
    </location>
</feature>
<feature type="strand" evidence="32">
    <location>
        <begin position="519"/>
        <end position="522"/>
    </location>
</feature>
<feature type="strand" evidence="32">
    <location>
        <begin position="524"/>
        <end position="529"/>
    </location>
</feature>
<feature type="helix" evidence="32">
    <location>
        <begin position="662"/>
        <end position="666"/>
    </location>
</feature>
<feature type="strand" evidence="32">
    <location>
        <begin position="669"/>
        <end position="676"/>
    </location>
</feature>
<feature type="helix" evidence="32">
    <location>
        <begin position="680"/>
        <end position="687"/>
    </location>
</feature>
<feature type="helix" evidence="32">
    <location>
        <begin position="691"/>
        <end position="702"/>
    </location>
</feature>
<feature type="turn" evidence="33">
    <location>
        <begin position="704"/>
        <end position="706"/>
    </location>
</feature>
<feature type="strand" evidence="32">
    <location>
        <begin position="708"/>
        <end position="711"/>
    </location>
</feature>
<feature type="helix" evidence="32">
    <location>
        <begin position="712"/>
        <end position="721"/>
    </location>
</feature>
<feature type="turn" evidence="32">
    <location>
        <begin position="722"/>
        <end position="724"/>
    </location>
</feature>
<feature type="strand" evidence="32">
    <location>
        <begin position="725"/>
        <end position="731"/>
    </location>
</feature>
<feature type="helix" evidence="32">
    <location>
        <begin position="732"/>
        <end position="739"/>
    </location>
</feature>
<feature type="strand" evidence="32">
    <location>
        <begin position="746"/>
        <end position="750"/>
    </location>
</feature>
<feature type="strand" evidence="32">
    <location>
        <begin position="756"/>
        <end position="758"/>
    </location>
</feature>
<feature type="strand" evidence="32">
    <location>
        <begin position="761"/>
        <end position="763"/>
    </location>
</feature>
<feature type="helix" evidence="32">
    <location>
        <begin position="769"/>
        <end position="781"/>
    </location>
</feature>
<feature type="helix" evidence="32">
    <location>
        <begin position="784"/>
        <end position="793"/>
    </location>
</feature>
<feature type="turn" evidence="32">
    <location>
        <begin position="794"/>
        <end position="796"/>
    </location>
</feature>
<protein>
    <recommendedName>
        <fullName evidence="21">Glutamate receptor 3</fullName>
        <shortName>GluR-3</shortName>
    </recommendedName>
    <alternativeName>
        <fullName>AMPA-selective glutamate receptor 3</fullName>
    </alternativeName>
    <alternativeName>
        <fullName>GluR-C</fullName>
    </alternativeName>
    <alternativeName>
        <fullName evidence="20">GluR-K3</fullName>
    </alternativeName>
    <alternativeName>
        <fullName>Glutamate receptor ionotropic, AMPA 3</fullName>
    </alternativeName>
</protein>
<organism>
    <name type="scientific">Rattus norvegicus</name>
    <name type="common">Rat</name>
    <dbReference type="NCBI Taxonomy" id="10116"/>
    <lineage>
        <taxon>Eukaryota</taxon>
        <taxon>Metazoa</taxon>
        <taxon>Chordata</taxon>
        <taxon>Craniata</taxon>
        <taxon>Vertebrata</taxon>
        <taxon>Euteleostomi</taxon>
        <taxon>Mammalia</taxon>
        <taxon>Eutheria</taxon>
        <taxon>Euarchontoglires</taxon>
        <taxon>Glires</taxon>
        <taxon>Rodentia</taxon>
        <taxon>Myomorpha</taxon>
        <taxon>Muroidea</taxon>
        <taxon>Muridae</taxon>
        <taxon>Murinae</taxon>
        <taxon>Rattus</taxon>
    </lineage>
</organism>
<sequence>MGQSVLRAVFFLVLGLLGHSHGGFPNTISIGGLFMRNTVQEHSAFRFAVQLYNTNQNTTEKPFHLNYHVDHLDSSNSFSVTNAFCSQFSRGVYAIFGFYDQMSMNTLTSFCGALHTSFVTPSFPTDADVQFVIQMRPALKGAILSLLSYYKWEKFVYLYDTERGFSVLQAIMEAAVQNNWQVTARSVGNIKDVQEFRRIIEEMDRRQEKRYLIDCEVERINTILEQVVILGKHSRGYHYMLANLGFTDILLERVMHGGANITGFQIVNNENPMVQQFIQRWVRLDEREFPEAKNAPLKYTSALTHDAILVIAEAFRYLRRQRVDVSRRGSAGDCLANPAVPWSQGIDIERALKMVQVQGMTGNIQFDTYGRRTNYTIDVYEMKVSGSRKAGYWNEYERFVPFSDQQISNDSSSSENRTIVVTTILESPYVMYKKNHEQLEGNERYEGYCVDLAYEIAKHVRIKYKLSIVGDGKYGARDPETKIWNGMVGELVYGRADIAVAPLTITLVREEVIDFSKPFMSLGISIMIKKPQKSKPGVFSFLDPLAYEIWMCIVFAYIGVSVVLFLVSRFSPYEWHLEDNNEEPRDPQSPPDPPNEFGIFNSLWFSLGAFMQQGCDISPRSLSGRIVGGVWWFFTLIIISSYTANLAAFLTVERMVSPIESAEDLAKQTEIAYGTLDSGSTKEFFRRSKIAVYEKMWSYMKSAEPSVFTKTTADGVARVRKSKGKFAFLLESTMNEYIEQRKPCDTMKVGGNLDSKGYGVATPKGSALGNAVNLAVLKLNEQGLLDKLKNKWWYDKGECGSGGGDSKDKTSALSLSNVAGVFYILVGGLGLAMMVALIEFCYKSRAESKRMKLTKNTQNFKPAPATNTQNYATYREGYNVYGTESVKI</sequence>
<accession>P19492</accession>
<comment type="function">
    <text evidence="4 5 9 10 16 17">Ionotropic glutamate receptor that functions as a ligand-gated cation channel, gated by L-glutamate and glutamatergic agonists such as alpha-amino-3-hydroxy-5-methyl-4-isoxazolepropionic acid (AMPA), quisqualic acid, and kainic acid (PubMed:1699567, PubMed:1709304, PubMed:2166337, PubMed:2168579). L-glutamate acts as an excitatory neurotransmitter at many synapses in the central nervous system and plays an important role in fast excitatory synaptic transmission by inducing long-term potentiation (By similarity). Binding of the excitatory neurotransmitter L-glutamate induces a conformation change, leading to the opening of the cation channel, and thereby converts the chemical signal to an electrical impulse upon entry of calcium (PubMed:1709304). The receptor then desensitizes rapidly and enters a transient inactive state, characterized by the presence of bound agonist (By similarity). In the presence of CACNG8, shows resensitization which is characterized by a delayed accumulation of current flux upon continued application of glutamate (By similarity).</text>
</comment>
<comment type="catalytic activity">
    <reaction evidence="10">
        <text>Ca(2+)(in) = Ca(2+)(out)</text>
        <dbReference type="Rhea" id="RHEA:29671"/>
        <dbReference type="ChEBI" id="CHEBI:29108"/>
    </reaction>
</comment>
<comment type="subunit">
    <text evidence="5 7 8 11 13 15 19">Homotetramer or heterotetramer of pore-forming glutamate receptor subunits (PubMed:21317871). Tetramers may be formed by the dimerization of dimers (PubMed:21317871). Interacts with PICK1, GRIP1 and GRIP2 (PubMed:10027300, PubMed:10414981, PubMed:9069286). Found in a complex with GRIA1, GRIA2, GRIA4, CNIH2, CNIH3, CACNG2, CACNG3, CACNG4, CACNG5, CACNG7 and CACNG8 (PubMed:19265014). Interacts with CACNG5 (PubMed:18817736). Found in a complex with GRIA1, GRIA2, GRIA4, DLG4, CACNG8 and CNIH2 (By similarity).</text>
</comment>
<comment type="interaction">
    <interactant intactId="EBI-77764">
        <id>P19492</id>
    </interactant>
    <interactant intactId="EBI-936113">
        <id>P97879</id>
        <label>Grip1</label>
    </interactant>
    <organismsDiffer>false</organismsDiffer>
    <experiments>3</experiments>
</comment>
<comment type="interaction">
    <interactant intactId="EBI-77764">
        <id>P19492</id>
    </interactant>
    <interactant intactId="EBI-77728">
        <id>Q9EP80</id>
        <label>Pick1</label>
    </interactant>
    <organismsDiffer>false</organismsDiffer>
    <experiments>7</experiments>
</comment>
<comment type="interaction">
    <interactant intactId="EBI-16201849">
        <id>P19492-2</id>
    </interactant>
    <interactant intactId="EBI-15817825">
        <id>P19491-2</id>
        <label>Gria2</label>
    </interactant>
    <organismsDiffer>false</organismsDiffer>
    <experiments>6</experiments>
</comment>
<comment type="subcellular location">
    <subcellularLocation>
        <location>Cell membrane</location>
        <topology>Multi-pass membrane protein</topology>
    </subcellularLocation>
    <subcellularLocation>
        <location evidence="18">Postsynaptic cell membrane</location>
        <topology>Multi-pass membrane protein</topology>
    </subcellularLocation>
    <subcellularLocation>
        <location evidence="18 22">Postsynaptic density membrane</location>
    </subcellularLocation>
</comment>
<comment type="alternative products">
    <event type="alternative splicing"/>
    <isoform>
        <id>P19492-1</id>
        <name>Flop</name>
        <sequence type="displayed"/>
    </isoform>
    <isoform>
        <id>P19492-2</id>
        <name>Flip</name>
        <sequence type="described" ref="VSP_000119 VSP_000120 VSP_000121 VSP_000122"/>
    </isoform>
</comment>
<comment type="miscellaneous">
    <text evidence="16 17">The postsynaptic actions of Glu are mediated by a variety of receptors that are named according to their selective agonists (PubMed:2166337, PubMed:2168579). This receptor binds AMPA (quisqualate) &gt; glutamate &gt; kainate (PubMed:2166337, PubMed:2168579).</text>
</comment>
<comment type="similarity">
    <text evidence="21">Belongs to the glutamate-gated ion channel (TC 1.A.10.1) family. GRIA3 subfamily.</text>
</comment>